<accession>Q9KGJ6</accession>
<feature type="chain" id="PRO_0000233731" description="Bifunctional protein GlmU">
    <location>
        <begin position="1"/>
        <end position="455"/>
    </location>
</feature>
<feature type="region of interest" description="Pyrophosphorylase" evidence="1">
    <location>
        <begin position="1"/>
        <end position="230"/>
    </location>
</feature>
<feature type="region of interest" description="Linker" evidence="1">
    <location>
        <begin position="231"/>
        <end position="251"/>
    </location>
</feature>
<feature type="region of interest" description="N-acetyltransferase" evidence="1">
    <location>
        <begin position="252"/>
        <end position="455"/>
    </location>
</feature>
<feature type="active site" description="Proton acceptor" evidence="1">
    <location>
        <position position="363"/>
    </location>
</feature>
<feature type="binding site" evidence="1">
    <location>
        <begin position="9"/>
        <end position="12"/>
    </location>
    <ligand>
        <name>UDP-N-acetyl-alpha-D-glucosamine</name>
        <dbReference type="ChEBI" id="CHEBI:57705"/>
    </ligand>
</feature>
<feature type="binding site" evidence="1">
    <location>
        <position position="23"/>
    </location>
    <ligand>
        <name>UDP-N-acetyl-alpha-D-glucosamine</name>
        <dbReference type="ChEBI" id="CHEBI:57705"/>
    </ligand>
</feature>
<feature type="binding site" evidence="1">
    <location>
        <position position="73"/>
    </location>
    <ligand>
        <name>UDP-N-acetyl-alpha-D-glucosamine</name>
        <dbReference type="ChEBI" id="CHEBI:57705"/>
    </ligand>
</feature>
<feature type="binding site" evidence="1">
    <location>
        <begin position="78"/>
        <end position="79"/>
    </location>
    <ligand>
        <name>UDP-N-acetyl-alpha-D-glucosamine</name>
        <dbReference type="ChEBI" id="CHEBI:57705"/>
    </ligand>
</feature>
<feature type="binding site" evidence="1">
    <location>
        <position position="103"/>
    </location>
    <ligand>
        <name>Mg(2+)</name>
        <dbReference type="ChEBI" id="CHEBI:18420"/>
    </ligand>
</feature>
<feature type="binding site" evidence="1">
    <location>
        <position position="140"/>
    </location>
    <ligand>
        <name>UDP-N-acetyl-alpha-D-glucosamine</name>
        <dbReference type="ChEBI" id="CHEBI:57705"/>
    </ligand>
</feature>
<feature type="binding site" evidence="1">
    <location>
        <position position="155"/>
    </location>
    <ligand>
        <name>UDP-N-acetyl-alpha-D-glucosamine</name>
        <dbReference type="ChEBI" id="CHEBI:57705"/>
    </ligand>
</feature>
<feature type="binding site" evidence="1">
    <location>
        <position position="170"/>
    </location>
    <ligand>
        <name>UDP-N-acetyl-alpha-D-glucosamine</name>
        <dbReference type="ChEBI" id="CHEBI:57705"/>
    </ligand>
</feature>
<feature type="binding site" evidence="1">
    <location>
        <position position="228"/>
    </location>
    <ligand>
        <name>Mg(2+)</name>
        <dbReference type="ChEBI" id="CHEBI:18420"/>
    </ligand>
</feature>
<feature type="binding site" evidence="1">
    <location>
        <position position="228"/>
    </location>
    <ligand>
        <name>UDP-N-acetyl-alpha-D-glucosamine</name>
        <dbReference type="ChEBI" id="CHEBI:57705"/>
    </ligand>
</feature>
<feature type="binding site" evidence="1">
    <location>
        <position position="333"/>
    </location>
    <ligand>
        <name>UDP-N-acetyl-alpha-D-glucosamine</name>
        <dbReference type="ChEBI" id="CHEBI:57705"/>
    </ligand>
</feature>
<feature type="binding site" evidence="1">
    <location>
        <position position="351"/>
    </location>
    <ligand>
        <name>UDP-N-acetyl-alpha-D-glucosamine</name>
        <dbReference type="ChEBI" id="CHEBI:57705"/>
    </ligand>
</feature>
<feature type="binding site" evidence="1">
    <location>
        <position position="366"/>
    </location>
    <ligand>
        <name>UDP-N-acetyl-alpha-D-glucosamine</name>
        <dbReference type="ChEBI" id="CHEBI:57705"/>
    </ligand>
</feature>
<feature type="binding site" evidence="1">
    <location>
        <position position="377"/>
    </location>
    <ligand>
        <name>UDP-N-acetyl-alpha-D-glucosamine</name>
        <dbReference type="ChEBI" id="CHEBI:57705"/>
    </ligand>
</feature>
<feature type="binding site" evidence="1">
    <location>
        <begin position="386"/>
        <end position="387"/>
    </location>
    <ligand>
        <name>acetyl-CoA</name>
        <dbReference type="ChEBI" id="CHEBI:57288"/>
    </ligand>
</feature>
<feature type="binding site" evidence="1">
    <location>
        <position position="423"/>
    </location>
    <ligand>
        <name>acetyl-CoA</name>
        <dbReference type="ChEBI" id="CHEBI:57288"/>
    </ligand>
</feature>
<feature type="binding site" evidence="1">
    <location>
        <position position="440"/>
    </location>
    <ligand>
        <name>acetyl-CoA</name>
        <dbReference type="ChEBI" id="CHEBI:57288"/>
    </ligand>
</feature>
<proteinExistence type="inferred from homology"/>
<evidence type="ECO:0000255" key="1">
    <source>
        <dbReference type="HAMAP-Rule" id="MF_01631"/>
    </source>
</evidence>
<organism>
    <name type="scientific">Halalkalibacterium halodurans (strain ATCC BAA-125 / DSM 18197 / FERM 7344 / JCM 9153 / C-125)</name>
    <name type="common">Bacillus halodurans</name>
    <dbReference type="NCBI Taxonomy" id="272558"/>
    <lineage>
        <taxon>Bacteria</taxon>
        <taxon>Bacillati</taxon>
        <taxon>Bacillota</taxon>
        <taxon>Bacilli</taxon>
        <taxon>Bacillales</taxon>
        <taxon>Bacillaceae</taxon>
        <taxon>Halalkalibacterium (ex Joshi et al. 2022)</taxon>
    </lineage>
</organism>
<comment type="function">
    <text evidence="1">Catalyzes the last two sequential reactions in the de novo biosynthetic pathway for UDP-N-acetylglucosamine (UDP-GlcNAc). The C-terminal domain catalyzes the transfer of acetyl group from acetyl coenzyme A to glucosamine-1-phosphate (GlcN-1-P) to produce N-acetylglucosamine-1-phosphate (GlcNAc-1-P), which is converted into UDP-GlcNAc by the transfer of uridine 5-monophosphate (from uridine 5-triphosphate), a reaction catalyzed by the N-terminal domain.</text>
</comment>
<comment type="catalytic activity">
    <reaction evidence="1">
        <text>alpha-D-glucosamine 1-phosphate + acetyl-CoA = N-acetyl-alpha-D-glucosamine 1-phosphate + CoA + H(+)</text>
        <dbReference type="Rhea" id="RHEA:13725"/>
        <dbReference type="ChEBI" id="CHEBI:15378"/>
        <dbReference type="ChEBI" id="CHEBI:57287"/>
        <dbReference type="ChEBI" id="CHEBI:57288"/>
        <dbReference type="ChEBI" id="CHEBI:57776"/>
        <dbReference type="ChEBI" id="CHEBI:58516"/>
        <dbReference type="EC" id="2.3.1.157"/>
    </reaction>
</comment>
<comment type="catalytic activity">
    <reaction evidence="1">
        <text>N-acetyl-alpha-D-glucosamine 1-phosphate + UTP + H(+) = UDP-N-acetyl-alpha-D-glucosamine + diphosphate</text>
        <dbReference type="Rhea" id="RHEA:13509"/>
        <dbReference type="ChEBI" id="CHEBI:15378"/>
        <dbReference type="ChEBI" id="CHEBI:33019"/>
        <dbReference type="ChEBI" id="CHEBI:46398"/>
        <dbReference type="ChEBI" id="CHEBI:57705"/>
        <dbReference type="ChEBI" id="CHEBI:57776"/>
        <dbReference type="EC" id="2.7.7.23"/>
    </reaction>
</comment>
<comment type="cofactor">
    <cofactor evidence="1">
        <name>Mg(2+)</name>
        <dbReference type="ChEBI" id="CHEBI:18420"/>
    </cofactor>
    <text evidence="1">Binds 1 Mg(2+) ion per subunit.</text>
</comment>
<comment type="pathway">
    <text evidence="1">Nucleotide-sugar biosynthesis; UDP-N-acetyl-alpha-D-glucosamine biosynthesis; N-acetyl-alpha-D-glucosamine 1-phosphate from alpha-D-glucosamine 6-phosphate (route II): step 2/2.</text>
</comment>
<comment type="pathway">
    <text evidence="1">Nucleotide-sugar biosynthesis; UDP-N-acetyl-alpha-D-glucosamine biosynthesis; UDP-N-acetyl-alpha-D-glucosamine from N-acetyl-alpha-D-glucosamine 1-phosphate: step 1/1.</text>
</comment>
<comment type="pathway">
    <text evidence="1">Bacterial outer membrane biogenesis; LPS lipid A biosynthesis.</text>
</comment>
<comment type="subunit">
    <text evidence="1">Homotrimer.</text>
</comment>
<comment type="subcellular location">
    <subcellularLocation>
        <location evidence="1">Cytoplasm</location>
    </subcellularLocation>
</comment>
<comment type="similarity">
    <text evidence="1">In the N-terminal section; belongs to the N-acetylglucosamine-1-phosphate uridyltransferase family.</text>
</comment>
<comment type="similarity">
    <text evidence="1">In the C-terminal section; belongs to the transferase hexapeptide repeat family.</text>
</comment>
<reference key="1">
    <citation type="journal article" date="2000" name="Nucleic Acids Res.">
        <title>Complete genome sequence of the alkaliphilic bacterium Bacillus halodurans and genomic sequence comparison with Bacillus subtilis.</title>
        <authorList>
            <person name="Takami H."/>
            <person name="Nakasone K."/>
            <person name="Takaki Y."/>
            <person name="Maeno G."/>
            <person name="Sasaki R."/>
            <person name="Masui N."/>
            <person name="Fuji F."/>
            <person name="Hirama C."/>
            <person name="Nakamura Y."/>
            <person name="Ogasawara N."/>
            <person name="Kuhara S."/>
            <person name="Horikoshi K."/>
        </authorList>
    </citation>
    <scope>NUCLEOTIDE SEQUENCE [LARGE SCALE GENOMIC DNA]</scope>
    <source>
        <strain>ATCC BAA-125 / DSM 18197 / FERM 7344 / JCM 9153 / C-125</strain>
    </source>
</reference>
<sequence>MSNRFAVILAAGQGTRMKSKLYKVLHSVCGKPMVQHVVDQVSALGFDEIVTIIGHGADAVKSQLGERVSYALQEEQLGTGHAVLQAESALGGRRGVTIVLCGDTPLLTAETIDHVMSYHEEEQAKATVLTAELADPTGYGRIVRNDKGLVERIVEHKDATSEEKQITEVNTGTYCFDNEALFQALKEVGNNNAQGEYYLPDVIQILQTKGEKVAAYKTAHVEETLGVNDRVALAQAEQVMKRRINEAWMRKGVTFIDPEQTYVSPDATIGQDTVIYPGTMVLGQTTIGEGCVLGPHTELKDSKIGNKTAVKQSVVHNSEVGERVSIGPFSHIRPASMIHDDVRIGNFVEVKKSTIGKESKASHLSYIGDAEVGERVNFSCGSITVNYDGKNKFLTKIEDDAFIGCNSNLIAPVTIGKGALIAAGSTITEDVPSDALSIARARQTNKEHYVTKKNN</sequence>
<dbReference type="EC" id="2.7.7.23" evidence="1"/>
<dbReference type="EC" id="2.3.1.157" evidence="1"/>
<dbReference type="EMBL" id="BA000004">
    <property type="protein sequence ID" value="BAB03784.1"/>
    <property type="molecule type" value="Genomic_DNA"/>
</dbReference>
<dbReference type="PIR" id="A83658">
    <property type="entry name" value="A83658"/>
</dbReference>
<dbReference type="RefSeq" id="WP_010896249.1">
    <property type="nucleotide sequence ID" value="NC_002570.2"/>
</dbReference>
<dbReference type="SMR" id="Q9KGJ6"/>
<dbReference type="STRING" id="272558.gene:10725887"/>
<dbReference type="KEGG" id="bha:BH0065"/>
<dbReference type="eggNOG" id="COG1207">
    <property type="taxonomic scope" value="Bacteria"/>
</dbReference>
<dbReference type="HOGENOM" id="CLU_029499_15_2_9"/>
<dbReference type="OrthoDB" id="9775031at2"/>
<dbReference type="UniPathway" id="UPA00113">
    <property type="reaction ID" value="UER00532"/>
</dbReference>
<dbReference type="UniPathway" id="UPA00113">
    <property type="reaction ID" value="UER00533"/>
</dbReference>
<dbReference type="UniPathway" id="UPA00973"/>
<dbReference type="Proteomes" id="UP000001258">
    <property type="component" value="Chromosome"/>
</dbReference>
<dbReference type="GO" id="GO:0005737">
    <property type="term" value="C:cytoplasm"/>
    <property type="evidence" value="ECO:0007669"/>
    <property type="project" value="UniProtKB-SubCell"/>
</dbReference>
<dbReference type="GO" id="GO:0016020">
    <property type="term" value="C:membrane"/>
    <property type="evidence" value="ECO:0007669"/>
    <property type="project" value="GOC"/>
</dbReference>
<dbReference type="GO" id="GO:0019134">
    <property type="term" value="F:glucosamine-1-phosphate N-acetyltransferase activity"/>
    <property type="evidence" value="ECO:0007669"/>
    <property type="project" value="UniProtKB-UniRule"/>
</dbReference>
<dbReference type="GO" id="GO:0000287">
    <property type="term" value="F:magnesium ion binding"/>
    <property type="evidence" value="ECO:0007669"/>
    <property type="project" value="UniProtKB-UniRule"/>
</dbReference>
<dbReference type="GO" id="GO:0003977">
    <property type="term" value="F:UDP-N-acetylglucosamine diphosphorylase activity"/>
    <property type="evidence" value="ECO:0007669"/>
    <property type="project" value="UniProtKB-UniRule"/>
</dbReference>
<dbReference type="GO" id="GO:0000902">
    <property type="term" value="P:cell morphogenesis"/>
    <property type="evidence" value="ECO:0007669"/>
    <property type="project" value="UniProtKB-UniRule"/>
</dbReference>
<dbReference type="GO" id="GO:0071555">
    <property type="term" value="P:cell wall organization"/>
    <property type="evidence" value="ECO:0007669"/>
    <property type="project" value="UniProtKB-KW"/>
</dbReference>
<dbReference type="GO" id="GO:0009245">
    <property type="term" value="P:lipid A biosynthetic process"/>
    <property type="evidence" value="ECO:0007669"/>
    <property type="project" value="UniProtKB-UniRule"/>
</dbReference>
<dbReference type="GO" id="GO:0009252">
    <property type="term" value="P:peptidoglycan biosynthetic process"/>
    <property type="evidence" value="ECO:0007669"/>
    <property type="project" value="UniProtKB-UniRule"/>
</dbReference>
<dbReference type="GO" id="GO:0008360">
    <property type="term" value="P:regulation of cell shape"/>
    <property type="evidence" value="ECO:0007669"/>
    <property type="project" value="UniProtKB-KW"/>
</dbReference>
<dbReference type="GO" id="GO:0006048">
    <property type="term" value="P:UDP-N-acetylglucosamine biosynthetic process"/>
    <property type="evidence" value="ECO:0007669"/>
    <property type="project" value="UniProtKB-UniPathway"/>
</dbReference>
<dbReference type="CDD" id="cd02540">
    <property type="entry name" value="GT2_GlmU_N_bac"/>
    <property type="match status" value="1"/>
</dbReference>
<dbReference type="CDD" id="cd03353">
    <property type="entry name" value="LbH_GlmU_C"/>
    <property type="match status" value="1"/>
</dbReference>
<dbReference type="Gene3D" id="2.160.10.10">
    <property type="entry name" value="Hexapeptide repeat proteins"/>
    <property type="match status" value="1"/>
</dbReference>
<dbReference type="Gene3D" id="3.90.550.10">
    <property type="entry name" value="Spore Coat Polysaccharide Biosynthesis Protein SpsA, Chain A"/>
    <property type="match status" value="1"/>
</dbReference>
<dbReference type="HAMAP" id="MF_01631">
    <property type="entry name" value="GlmU"/>
    <property type="match status" value="1"/>
</dbReference>
<dbReference type="InterPro" id="IPR005882">
    <property type="entry name" value="Bifunctional_GlmU"/>
</dbReference>
<dbReference type="InterPro" id="IPR050065">
    <property type="entry name" value="GlmU-like"/>
</dbReference>
<dbReference type="InterPro" id="IPR038009">
    <property type="entry name" value="GlmU_C_LbH"/>
</dbReference>
<dbReference type="InterPro" id="IPR001451">
    <property type="entry name" value="Hexapep"/>
</dbReference>
<dbReference type="InterPro" id="IPR018357">
    <property type="entry name" value="Hexapep_transf_CS"/>
</dbReference>
<dbReference type="InterPro" id="IPR005835">
    <property type="entry name" value="NTP_transferase_dom"/>
</dbReference>
<dbReference type="InterPro" id="IPR029044">
    <property type="entry name" value="Nucleotide-diphossugar_trans"/>
</dbReference>
<dbReference type="InterPro" id="IPR011004">
    <property type="entry name" value="Trimer_LpxA-like_sf"/>
</dbReference>
<dbReference type="NCBIfam" id="TIGR01173">
    <property type="entry name" value="glmU"/>
    <property type="match status" value="1"/>
</dbReference>
<dbReference type="NCBIfam" id="NF010934">
    <property type="entry name" value="PRK14354.1"/>
    <property type="match status" value="1"/>
</dbReference>
<dbReference type="PANTHER" id="PTHR43584:SF3">
    <property type="entry name" value="BIFUNCTIONAL PROTEIN GLMU"/>
    <property type="match status" value="1"/>
</dbReference>
<dbReference type="PANTHER" id="PTHR43584">
    <property type="entry name" value="NUCLEOTIDYL TRANSFERASE"/>
    <property type="match status" value="1"/>
</dbReference>
<dbReference type="Pfam" id="PF00132">
    <property type="entry name" value="Hexapep"/>
    <property type="match status" value="3"/>
</dbReference>
<dbReference type="Pfam" id="PF00483">
    <property type="entry name" value="NTP_transferase"/>
    <property type="match status" value="1"/>
</dbReference>
<dbReference type="SUPFAM" id="SSF53448">
    <property type="entry name" value="Nucleotide-diphospho-sugar transferases"/>
    <property type="match status" value="1"/>
</dbReference>
<dbReference type="SUPFAM" id="SSF51161">
    <property type="entry name" value="Trimeric LpxA-like enzymes"/>
    <property type="match status" value="1"/>
</dbReference>
<dbReference type="PROSITE" id="PS00101">
    <property type="entry name" value="HEXAPEP_TRANSFERASES"/>
    <property type="match status" value="1"/>
</dbReference>
<name>GLMU_HALH5</name>
<gene>
    <name evidence="1" type="primary">glmU</name>
    <name type="ordered locus">BH0065</name>
</gene>
<protein>
    <recommendedName>
        <fullName evidence="1">Bifunctional protein GlmU</fullName>
    </recommendedName>
    <domain>
        <recommendedName>
            <fullName evidence="1">UDP-N-acetylglucosamine pyrophosphorylase</fullName>
            <ecNumber evidence="1">2.7.7.23</ecNumber>
        </recommendedName>
        <alternativeName>
            <fullName evidence="1">N-acetylglucosamine-1-phosphate uridyltransferase</fullName>
        </alternativeName>
    </domain>
    <domain>
        <recommendedName>
            <fullName evidence="1">Glucosamine-1-phosphate N-acetyltransferase</fullName>
            <ecNumber evidence="1">2.3.1.157</ecNumber>
        </recommendedName>
    </domain>
</protein>
<keyword id="KW-0012">Acyltransferase</keyword>
<keyword id="KW-0133">Cell shape</keyword>
<keyword id="KW-0961">Cell wall biogenesis/degradation</keyword>
<keyword id="KW-0963">Cytoplasm</keyword>
<keyword id="KW-0460">Magnesium</keyword>
<keyword id="KW-0479">Metal-binding</keyword>
<keyword id="KW-0511">Multifunctional enzyme</keyword>
<keyword id="KW-0548">Nucleotidyltransferase</keyword>
<keyword id="KW-0573">Peptidoglycan synthesis</keyword>
<keyword id="KW-1185">Reference proteome</keyword>
<keyword id="KW-0677">Repeat</keyword>
<keyword id="KW-0808">Transferase</keyword>